<dbReference type="EMBL" id="BC120248">
    <property type="protein sequence ID" value="AAI20249.1"/>
    <property type="molecule type" value="mRNA"/>
</dbReference>
<dbReference type="RefSeq" id="NP_001073082.1">
    <property type="nucleotide sequence ID" value="NM_001079614.2"/>
</dbReference>
<dbReference type="SMR" id="Q0P5C3"/>
<dbReference type="FunCoup" id="Q0P5C3">
    <property type="interactions" value="143"/>
</dbReference>
<dbReference type="STRING" id="9913.ENSBTAP00000018417"/>
<dbReference type="PaxDb" id="9913-ENSBTAP00000018417"/>
<dbReference type="Ensembl" id="ENSBTAT00000018417.5">
    <property type="protein sequence ID" value="ENSBTAP00000018417.3"/>
    <property type="gene ID" value="ENSBTAG00000013873.5"/>
</dbReference>
<dbReference type="GeneID" id="540230"/>
<dbReference type="KEGG" id="bta:540230"/>
<dbReference type="CTD" id="4488"/>
<dbReference type="VEuPathDB" id="HostDB:ENSBTAG00000013873"/>
<dbReference type="VGNC" id="VGNC:31712">
    <property type="gene designation" value="MSX2"/>
</dbReference>
<dbReference type="eggNOG" id="KOG0492">
    <property type="taxonomic scope" value="Eukaryota"/>
</dbReference>
<dbReference type="GeneTree" id="ENSGT00940000159824"/>
<dbReference type="HOGENOM" id="CLU_072675_0_0_1"/>
<dbReference type="InParanoid" id="Q0P5C3"/>
<dbReference type="OMA" id="PVGYNMY"/>
<dbReference type="OrthoDB" id="6159439at2759"/>
<dbReference type="TreeFam" id="TF350699"/>
<dbReference type="Proteomes" id="UP000009136">
    <property type="component" value="Chromosome 20"/>
</dbReference>
<dbReference type="Bgee" id="ENSBTAG00000013873">
    <property type="expression patterns" value="Expressed in conceptus and 66 other cell types or tissues"/>
</dbReference>
<dbReference type="GO" id="GO:0005634">
    <property type="term" value="C:nucleus"/>
    <property type="evidence" value="ECO:0000318"/>
    <property type="project" value="GO_Central"/>
</dbReference>
<dbReference type="GO" id="GO:0000981">
    <property type="term" value="F:DNA-binding transcription factor activity, RNA polymerase II-specific"/>
    <property type="evidence" value="ECO:0000318"/>
    <property type="project" value="GO_Central"/>
</dbReference>
<dbReference type="GO" id="GO:0000977">
    <property type="term" value="F:RNA polymerase II transcription regulatory region sequence-specific DNA binding"/>
    <property type="evidence" value="ECO:0000318"/>
    <property type="project" value="GO_Central"/>
</dbReference>
<dbReference type="GO" id="GO:0000976">
    <property type="term" value="F:transcription cis-regulatory region binding"/>
    <property type="evidence" value="ECO:0000250"/>
    <property type="project" value="UniProtKB"/>
</dbReference>
<dbReference type="GO" id="GO:0048598">
    <property type="term" value="P:embryonic morphogenesis"/>
    <property type="evidence" value="ECO:0000318"/>
    <property type="project" value="GO_Central"/>
</dbReference>
<dbReference type="GO" id="GO:0045892">
    <property type="term" value="P:negative regulation of DNA-templated transcription"/>
    <property type="evidence" value="ECO:0000250"/>
    <property type="project" value="UniProtKB"/>
</dbReference>
<dbReference type="GO" id="GO:0000122">
    <property type="term" value="P:negative regulation of transcription by RNA polymerase II"/>
    <property type="evidence" value="ECO:0000250"/>
    <property type="project" value="UniProtKB"/>
</dbReference>
<dbReference type="GO" id="GO:0001649">
    <property type="term" value="P:osteoblast differentiation"/>
    <property type="evidence" value="ECO:0000250"/>
    <property type="project" value="UniProtKB"/>
</dbReference>
<dbReference type="GO" id="GO:0006357">
    <property type="term" value="P:regulation of transcription by RNA polymerase II"/>
    <property type="evidence" value="ECO:0000318"/>
    <property type="project" value="GO_Central"/>
</dbReference>
<dbReference type="CDD" id="cd00086">
    <property type="entry name" value="homeodomain"/>
    <property type="match status" value="1"/>
</dbReference>
<dbReference type="FunFam" id="1.10.10.60:FF:000134">
    <property type="entry name" value="Homeobox protein MSX-1"/>
    <property type="match status" value="1"/>
</dbReference>
<dbReference type="Gene3D" id="1.10.10.60">
    <property type="entry name" value="Homeodomain-like"/>
    <property type="match status" value="1"/>
</dbReference>
<dbReference type="InterPro" id="IPR001356">
    <property type="entry name" value="HD"/>
</dbReference>
<dbReference type="InterPro" id="IPR020479">
    <property type="entry name" value="HD_metazoa"/>
</dbReference>
<dbReference type="InterPro" id="IPR017970">
    <property type="entry name" value="Homeobox_CS"/>
</dbReference>
<dbReference type="InterPro" id="IPR009057">
    <property type="entry name" value="Homeodomain-like_sf"/>
</dbReference>
<dbReference type="InterPro" id="IPR050674">
    <property type="entry name" value="Msh_Homeobox_Regulators"/>
</dbReference>
<dbReference type="PANTHER" id="PTHR24338">
    <property type="entry name" value="HOMEOBOX PROTEIN MSX"/>
    <property type="match status" value="1"/>
</dbReference>
<dbReference type="PANTHER" id="PTHR24338:SF10">
    <property type="entry name" value="HOMEOBOX PROTEIN MSX-2"/>
    <property type="match status" value="1"/>
</dbReference>
<dbReference type="Pfam" id="PF00046">
    <property type="entry name" value="Homeodomain"/>
    <property type="match status" value="1"/>
</dbReference>
<dbReference type="PRINTS" id="PR00024">
    <property type="entry name" value="HOMEOBOX"/>
</dbReference>
<dbReference type="SMART" id="SM00389">
    <property type="entry name" value="HOX"/>
    <property type="match status" value="1"/>
</dbReference>
<dbReference type="SUPFAM" id="SSF46689">
    <property type="entry name" value="Homeodomain-like"/>
    <property type="match status" value="1"/>
</dbReference>
<dbReference type="PROSITE" id="PS00027">
    <property type="entry name" value="HOMEOBOX_1"/>
    <property type="match status" value="1"/>
</dbReference>
<dbReference type="PROSITE" id="PS50071">
    <property type="entry name" value="HOMEOBOX_2"/>
    <property type="match status" value="1"/>
</dbReference>
<protein>
    <recommendedName>
        <fullName>Homeobox protein MSX-2</fullName>
    </recommendedName>
</protein>
<comment type="function">
    <text evidence="1">Acts as a transcriptional regulator in bone development. Represses the ALPL promoter activity and antagonizes the stimulatory effect of DLX5 on ALPL expression during osteoblast differentiation. Probable morphogenetic role. May play a role in limb-pattern formation. In osteoblasts, suppresses transcription driven by the osteocalcin FGF response element (OCFRE). Binds to the homeodomain-response element of the ALPL promoter (By similarity).</text>
</comment>
<comment type="subunit">
    <text evidence="1">Interacts with MINT, with XRCC6 (Ku70) and XRCC5 (Ku80).</text>
</comment>
<comment type="subcellular location">
    <subcellularLocation>
        <location evidence="2">Nucleus</location>
    </subcellularLocation>
</comment>
<comment type="similarity">
    <text evidence="4">Belongs to the Msh homeobox family.</text>
</comment>
<accession>Q0P5C3</accession>
<feature type="chain" id="PRO_0000284076" description="Homeobox protein MSX-2">
    <location>
        <begin position="1"/>
        <end position="267"/>
    </location>
</feature>
<feature type="DNA-binding region" description="Homeobox" evidence="2">
    <location>
        <begin position="142"/>
        <end position="201"/>
    </location>
</feature>
<feature type="region of interest" description="Disordered" evidence="3">
    <location>
        <begin position="1"/>
        <end position="74"/>
    </location>
</feature>
<feature type="region of interest" description="Disordered" evidence="3">
    <location>
        <begin position="105"/>
        <end position="147"/>
    </location>
</feature>
<feature type="compositionally biased region" description="Basic and acidic residues" evidence="3">
    <location>
        <begin position="53"/>
        <end position="63"/>
    </location>
</feature>
<feature type="compositionally biased region" description="Basic residues" evidence="3">
    <location>
        <begin position="136"/>
        <end position="146"/>
    </location>
</feature>
<gene>
    <name type="primary">MSX2</name>
</gene>
<name>MSX2_BOVIN</name>
<sequence length="267" mass="29027">MASPSKGNDLFSSDEEGPAMVAGPGPGPGGAEGAAEERRVKVSSLPFSVEALMSDKKPPKETSPRPAESASAGATLRPLLLPGHGVREAHSPGPLVKPFETASVKSENSEDGAAWMQEPGRYSPPPRHMSPTTCTLRKHKTNRKPRTPFTTSQLLALERKFRQKQYLSIAERAEFSSSLNLTETQVKIWFQNRRAKAKRLQEAELEKLKMAAKPMLPSGFSLPFPINSPLQAASLYGASYPFHRPVLPIPPVGLYATPVGYGMYHLS</sequence>
<evidence type="ECO:0000250" key="1"/>
<evidence type="ECO:0000255" key="2">
    <source>
        <dbReference type="PROSITE-ProRule" id="PRU00108"/>
    </source>
</evidence>
<evidence type="ECO:0000256" key="3">
    <source>
        <dbReference type="SAM" id="MobiDB-lite"/>
    </source>
</evidence>
<evidence type="ECO:0000305" key="4"/>
<proteinExistence type="evidence at transcript level"/>
<organism>
    <name type="scientific">Bos taurus</name>
    <name type="common">Bovine</name>
    <dbReference type="NCBI Taxonomy" id="9913"/>
    <lineage>
        <taxon>Eukaryota</taxon>
        <taxon>Metazoa</taxon>
        <taxon>Chordata</taxon>
        <taxon>Craniata</taxon>
        <taxon>Vertebrata</taxon>
        <taxon>Euteleostomi</taxon>
        <taxon>Mammalia</taxon>
        <taxon>Eutheria</taxon>
        <taxon>Laurasiatheria</taxon>
        <taxon>Artiodactyla</taxon>
        <taxon>Ruminantia</taxon>
        <taxon>Pecora</taxon>
        <taxon>Bovidae</taxon>
        <taxon>Bovinae</taxon>
        <taxon>Bos</taxon>
    </lineage>
</organism>
<keyword id="KW-0217">Developmental protein</keyword>
<keyword id="KW-0238">DNA-binding</keyword>
<keyword id="KW-0371">Homeobox</keyword>
<keyword id="KW-0539">Nucleus</keyword>
<keyword id="KW-0892">Osteogenesis</keyword>
<keyword id="KW-1185">Reference proteome</keyword>
<keyword id="KW-0678">Repressor</keyword>
<keyword id="KW-0804">Transcription</keyword>
<keyword id="KW-0805">Transcription regulation</keyword>
<reference key="1">
    <citation type="submission" date="2006-08" db="EMBL/GenBank/DDBJ databases">
        <authorList>
            <consortium name="NIH - Mammalian Gene Collection (MGC) project"/>
        </authorList>
    </citation>
    <scope>NUCLEOTIDE SEQUENCE [LARGE SCALE MRNA]</scope>
    <source>
        <strain>Hereford</strain>
        <tissue>Placenta</tissue>
    </source>
</reference>